<evidence type="ECO:0000255" key="1">
    <source>
        <dbReference type="HAMAP-Rule" id="MF_00093"/>
    </source>
</evidence>
<accession>Q6MU89</accession>
<comment type="function">
    <text evidence="1">Peptide chain release factor 1 directs the termination of translation in response to the peptide chain termination codons UAG and UAA.</text>
</comment>
<comment type="subcellular location">
    <subcellularLocation>
        <location evidence="1">Cytoplasm</location>
    </subcellularLocation>
</comment>
<comment type="PTM">
    <text evidence="1">Methylated by PrmC. Methylation increases the termination efficiency of RF1.</text>
</comment>
<comment type="similarity">
    <text evidence="1">Belongs to the prokaryotic/mitochondrial release factor family.</text>
</comment>
<dbReference type="EMBL" id="BX293980">
    <property type="protein sequence ID" value="CAE76795.1"/>
    <property type="molecule type" value="Genomic_DNA"/>
</dbReference>
<dbReference type="RefSeq" id="NP_975153.1">
    <property type="nucleotide sequence ID" value="NC_005364.2"/>
</dbReference>
<dbReference type="RefSeq" id="WP_011166352.1">
    <property type="nucleotide sequence ID" value="NC_005364.2"/>
</dbReference>
<dbReference type="SMR" id="Q6MU89"/>
<dbReference type="STRING" id="272632.MSC_0150"/>
<dbReference type="KEGG" id="mmy:MSC_0150"/>
<dbReference type="PATRIC" id="fig|272632.4.peg.159"/>
<dbReference type="eggNOG" id="COG0216">
    <property type="taxonomic scope" value="Bacteria"/>
</dbReference>
<dbReference type="HOGENOM" id="CLU_036856_0_1_14"/>
<dbReference type="Proteomes" id="UP000001016">
    <property type="component" value="Chromosome"/>
</dbReference>
<dbReference type="GO" id="GO:0005737">
    <property type="term" value="C:cytoplasm"/>
    <property type="evidence" value="ECO:0007669"/>
    <property type="project" value="UniProtKB-SubCell"/>
</dbReference>
<dbReference type="GO" id="GO:0016149">
    <property type="term" value="F:translation release factor activity, codon specific"/>
    <property type="evidence" value="ECO:0007669"/>
    <property type="project" value="UniProtKB-UniRule"/>
</dbReference>
<dbReference type="FunFam" id="3.30.160.20:FF:000004">
    <property type="entry name" value="Peptide chain release factor 1"/>
    <property type="match status" value="1"/>
</dbReference>
<dbReference type="FunFam" id="3.30.70.1660:FF:000002">
    <property type="entry name" value="Peptide chain release factor 1"/>
    <property type="match status" value="1"/>
</dbReference>
<dbReference type="FunFam" id="3.30.70.1660:FF:000004">
    <property type="entry name" value="Peptide chain release factor 1"/>
    <property type="match status" value="1"/>
</dbReference>
<dbReference type="Gene3D" id="3.30.160.20">
    <property type="match status" value="1"/>
</dbReference>
<dbReference type="Gene3D" id="3.30.70.1660">
    <property type="match status" value="1"/>
</dbReference>
<dbReference type="Gene3D" id="6.10.140.1950">
    <property type="match status" value="1"/>
</dbReference>
<dbReference type="HAMAP" id="MF_00093">
    <property type="entry name" value="Rel_fac_1"/>
    <property type="match status" value="1"/>
</dbReference>
<dbReference type="InterPro" id="IPR005139">
    <property type="entry name" value="PCRF"/>
</dbReference>
<dbReference type="InterPro" id="IPR000352">
    <property type="entry name" value="Pep_chain_release_fac_I"/>
</dbReference>
<dbReference type="InterPro" id="IPR045853">
    <property type="entry name" value="Pep_chain_release_fac_I_sf"/>
</dbReference>
<dbReference type="InterPro" id="IPR050057">
    <property type="entry name" value="Prokaryotic/Mito_RF"/>
</dbReference>
<dbReference type="InterPro" id="IPR004373">
    <property type="entry name" value="RF-1"/>
</dbReference>
<dbReference type="NCBIfam" id="TIGR00019">
    <property type="entry name" value="prfA"/>
    <property type="match status" value="1"/>
</dbReference>
<dbReference type="NCBIfam" id="NF001859">
    <property type="entry name" value="PRK00591.1"/>
    <property type="match status" value="1"/>
</dbReference>
<dbReference type="PANTHER" id="PTHR43804">
    <property type="entry name" value="LD18447P"/>
    <property type="match status" value="1"/>
</dbReference>
<dbReference type="PANTHER" id="PTHR43804:SF7">
    <property type="entry name" value="LD18447P"/>
    <property type="match status" value="1"/>
</dbReference>
<dbReference type="Pfam" id="PF03462">
    <property type="entry name" value="PCRF"/>
    <property type="match status" value="1"/>
</dbReference>
<dbReference type="Pfam" id="PF00472">
    <property type="entry name" value="RF-1"/>
    <property type="match status" value="1"/>
</dbReference>
<dbReference type="SMART" id="SM00937">
    <property type="entry name" value="PCRF"/>
    <property type="match status" value="1"/>
</dbReference>
<dbReference type="SUPFAM" id="SSF75620">
    <property type="entry name" value="Release factor"/>
    <property type="match status" value="1"/>
</dbReference>
<dbReference type="PROSITE" id="PS00745">
    <property type="entry name" value="RF_PROK_I"/>
    <property type="match status" value="1"/>
</dbReference>
<reference key="1">
    <citation type="journal article" date="2004" name="Genome Res.">
        <title>The genome sequence of Mycoplasma mycoides subsp. mycoides SC type strain PG1T, the causative agent of contagious bovine pleuropneumonia (CBPP).</title>
        <authorList>
            <person name="Westberg J."/>
            <person name="Persson A."/>
            <person name="Holmberg A."/>
            <person name="Goesmann A."/>
            <person name="Lundeberg J."/>
            <person name="Johansson K.-E."/>
            <person name="Pettersson B."/>
            <person name="Uhlen M."/>
        </authorList>
    </citation>
    <scope>NUCLEOTIDE SEQUENCE [LARGE SCALE GENOMIC DNA]</scope>
    <source>
        <strain>CCUG 32753 / NCTC 10114 / PG1</strain>
    </source>
</reference>
<proteinExistence type="inferred from homology"/>
<protein>
    <recommendedName>
        <fullName evidence="1">Peptide chain release factor 1</fullName>
        <shortName evidence="1">RF-1</shortName>
    </recommendedName>
</protein>
<sequence>MNAKTYEALETMQKRLLQILKDLEDENILKDIKKFTELNKEKSNLEEVVEKFVEYKKAVEHIKDAKAILENEKDQELIELAKIELDENNDKVEHLQQVIEEMLLPKDPNDDKNVIVEIRGAAGGDEANIFAGDLLRMYKLYAETQNWKINILEASVGEAGGYSQVVFMIKGDRVYSKLKFESGAHRVQRVPKTEAKGRIQTSTATVAVLPEMSEVEIEIRSNDLRIDTYRASGAGGQHVNTTDSAVRITHLPTGIVVTSQDGRSQHDNKDIAMTMLRTKVYEAEVEKQQAQADATRKNAVGTGARSEKIRTYNYPQNRVTDHRVGLTLNKLDQVMEGNIDEFIIALINEEQRQKVAEQLEKNNE</sequence>
<feature type="chain" id="PRO_0000177706" description="Peptide chain release factor 1">
    <location>
        <begin position="1"/>
        <end position="364"/>
    </location>
</feature>
<feature type="modified residue" description="N5-methylglutamine" evidence="1">
    <location>
        <position position="237"/>
    </location>
</feature>
<organism>
    <name type="scientific">Mycoplasma mycoides subsp. mycoides SC (strain CCUG 32753 / NCTC 10114 / PG1)</name>
    <dbReference type="NCBI Taxonomy" id="272632"/>
    <lineage>
        <taxon>Bacteria</taxon>
        <taxon>Bacillati</taxon>
        <taxon>Mycoplasmatota</taxon>
        <taxon>Mollicutes</taxon>
        <taxon>Mycoplasmataceae</taxon>
        <taxon>Mycoplasma</taxon>
    </lineage>
</organism>
<keyword id="KW-0963">Cytoplasm</keyword>
<keyword id="KW-0488">Methylation</keyword>
<keyword id="KW-0648">Protein biosynthesis</keyword>
<keyword id="KW-1185">Reference proteome</keyword>
<name>RF1_MYCMS</name>
<gene>
    <name evidence="1" type="primary">prfA</name>
    <name type="ordered locus">MSC_0150</name>
</gene>